<sequence>MQSEAQSPRSSQICSTEPVFGGHQPRRVSHAVDVRWGGQLVTIGGDAPVRVQSMTNTDTADAIGTAIQIKELANAGSELVRITVNTPEAAAAVPAIREQLDRMGVTVPLVGDFHYNGHLLLRDYPGCAEALSKYRINPGNVGQGAKRDTQFALMIEAAAKYDKAVRIGVNWGSLDQDLLARMMDENGARAQPWGAQSVMYEALIQSAIGSAERAVELGLGRDRIVLSCKVSGVQDLIAVYRELGRRCGFALHLGLTEAGMGSKGIVASTAALGVLLQEGIGDTIRISLTPEPGAPRTGEVIVGQEILQTMGLRSFAPMVIACPGCGRTTSTLFQELAMQIQTYLREQMPVWRKEYPGVEKMNVAVMGCIVNGPGESKHANIGISLPGSGENPAAPVFIDGEKVKTLRGERIAEEFQQIVSDYVARNYGRTEALN</sequence>
<accession>B1YR44</accession>
<organism>
    <name type="scientific">Burkholderia ambifaria (strain MC40-6)</name>
    <dbReference type="NCBI Taxonomy" id="398577"/>
    <lineage>
        <taxon>Bacteria</taxon>
        <taxon>Pseudomonadati</taxon>
        <taxon>Pseudomonadota</taxon>
        <taxon>Betaproteobacteria</taxon>
        <taxon>Burkholderiales</taxon>
        <taxon>Burkholderiaceae</taxon>
        <taxon>Burkholderia</taxon>
        <taxon>Burkholderia cepacia complex</taxon>
    </lineage>
</organism>
<feature type="chain" id="PRO_1000097151" description="4-hydroxy-3-methylbut-2-en-1-yl diphosphate synthase (flavodoxin)">
    <location>
        <begin position="1"/>
        <end position="434"/>
    </location>
</feature>
<feature type="region of interest" description="Disordered" evidence="2">
    <location>
        <begin position="1"/>
        <end position="24"/>
    </location>
</feature>
<feature type="compositionally biased region" description="Polar residues" evidence="2">
    <location>
        <begin position="1"/>
        <end position="15"/>
    </location>
</feature>
<feature type="binding site" evidence="1">
    <location>
        <position position="322"/>
    </location>
    <ligand>
        <name>[4Fe-4S] cluster</name>
        <dbReference type="ChEBI" id="CHEBI:49883"/>
    </ligand>
</feature>
<feature type="binding site" evidence="1">
    <location>
        <position position="325"/>
    </location>
    <ligand>
        <name>[4Fe-4S] cluster</name>
        <dbReference type="ChEBI" id="CHEBI:49883"/>
    </ligand>
</feature>
<feature type="binding site" evidence="1">
    <location>
        <position position="368"/>
    </location>
    <ligand>
        <name>[4Fe-4S] cluster</name>
        <dbReference type="ChEBI" id="CHEBI:49883"/>
    </ligand>
</feature>
<feature type="binding site" evidence="1">
    <location>
        <position position="375"/>
    </location>
    <ligand>
        <name>[4Fe-4S] cluster</name>
        <dbReference type="ChEBI" id="CHEBI:49883"/>
    </ligand>
</feature>
<gene>
    <name evidence="1" type="primary">ispG</name>
    <name type="ordered locus">BamMC406_1723</name>
</gene>
<protein>
    <recommendedName>
        <fullName evidence="1">4-hydroxy-3-methylbut-2-en-1-yl diphosphate synthase (flavodoxin)</fullName>
        <ecNumber evidence="1">1.17.7.3</ecNumber>
    </recommendedName>
    <alternativeName>
        <fullName evidence="1">1-hydroxy-2-methyl-2-(E)-butenyl 4-diphosphate synthase</fullName>
    </alternativeName>
</protein>
<comment type="function">
    <text evidence="1">Converts 2C-methyl-D-erythritol 2,4-cyclodiphosphate (ME-2,4cPP) into 1-hydroxy-2-methyl-2-(E)-butenyl 4-diphosphate.</text>
</comment>
<comment type="catalytic activity">
    <reaction evidence="1">
        <text>(2E)-4-hydroxy-3-methylbut-2-enyl diphosphate + oxidized [flavodoxin] + H2O + 2 H(+) = 2-C-methyl-D-erythritol 2,4-cyclic diphosphate + reduced [flavodoxin]</text>
        <dbReference type="Rhea" id="RHEA:43604"/>
        <dbReference type="Rhea" id="RHEA-COMP:10622"/>
        <dbReference type="Rhea" id="RHEA-COMP:10623"/>
        <dbReference type="ChEBI" id="CHEBI:15377"/>
        <dbReference type="ChEBI" id="CHEBI:15378"/>
        <dbReference type="ChEBI" id="CHEBI:57618"/>
        <dbReference type="ChEBI" id="CHEBI:58210"/>
        <dbReference type="ChEBI" id="CHEBI:58483"/>
        <dbReference type="ChEBI" id="CHEBI:128753"/>
        <dbReference type="EC" id="1.17.7.3"/>
    </reaction>
</comment>
<comment type="cofactor">
    <cofactor evidence="1">
        <name>[4Fe-4S] cluster</name>
        <dbReference type="ChEBI" id="CHEBI:49883"/>
    </cofactor>
    <text evidence="1">Binds 1 [4Fe-4S] cluster.</text>
</comment>
<comment type="pathway">
    <text evidence="1">Isoprenoid biosynthesis; isopentenyl diphosphate biosynthesis via DXP pathway; isopentenyl diphosphate from 1-deoxy-D-xylulose 5-phosphate: step 5/6.</text>
</comment>
<comment type="similarity">
    <text evidence="1">Belongs to the IspG family.</text>
</comment>
<dbReference type="EC" id="1.17.7.3" evidence="1"/>
<dbReference type="EMBL" id="CP001025">
    <property type="protein sequence ID" value="ACB64208.1"/>
    <property type="molecule type" value="Genomic_DNA"/>
</dbReference>
<dbReference type="RefSeq" id="WP_012363994.1">
    <property type="nucleotide sequence ID" value="NC_010551.1"/>
</dbReference>
<dbReference type="SMR" id="B1YR44"/>
<dbReference type="GeneID" id="93086043"/>
<dbReference type="KEGG" id="bac:BamMC406_1723"/>
<dbReference type="HOGENOM" id="CLU_042258_1_0_4"/>
<dbReference type="OrthoDB" id="9803214at2"/>
<dbReference type="UniPathway" id="UPA00056">
    <property type="reaction ID" value="UER00096"/>
</dbReference>
<dbReference type="Proteomes" id="UP000001680">
    <property type="component" value="Chromosome 1"/>
</dbReference>
<dbReference type="GO" id="GO:0051539">
    <property type="term" value="F:4 iron, 4 sulfur cluster binding"/>
    <property type="evidence" value="ECO:0007669"/>
    <property type="project" value="UniProtKB-UniRule"/>
</dbReference>
<dbReference type="GO" id="GO:0046429">
    <property type="term" value="F:4-hydroxy-3-methylbut-2-en-1-yl diphosphate synthase activity (ferredoxin)"/>
    <property type="evidence" value="ECO:0007669"/>
    <property type="project" value="UniProtKB-UniRule"/>
</dbReference>
<dbReference type="GO" id="GO:0141197">
    <property type="term" value="F:4-hydroxy-3-methylbut-2-enyl-diphosphate synthase activity (flavodoxin)"/>
    <property type="evidence" value="ECO:0007669"/>
    <property type="project" value="UniProtKB-EC"/>
</dbReference>
<dbReference type="GO" id="GO:0005506">
    <property type="term" value="F:iron ion binding"/>
    <property type="evidence" value="ECO:0007669"/>
    <property type="project" value="InterPro"/>
</dbReference>
<dbReference type="GO" id="GO:0019288">
    <property type="term" value="P:isopentenyl diphosphate biosynthetic process, methylerythritol 4-phosphate pathway"/>
    <property type="evidence" value="ECO:0007669"/>
    <property type="project" value="UniProtKB-UniRule"/>
</dbReference>
<dbReference type="GO" id="GO:0016114">
    <property type="term" value="P:terpenoid biosynthetic process"/>
    <property type="evidence" value="ECO:0007669"/>
    <property type="project" value="InterPro"/>
</dbReference>
<dbReference type="FunFam" id="3.30.413.10:FF:000012">
    <property type="entry name" value="4-hydroxy-3-methylbut-2-en-1-yl diphosphate synthase (flavodoxin)"/>
    <property type="match status" value="1"/>
</dbReference>
<dbReference type="Gene3D" id="3.20.20.20">
    <property type="entry name" value="Dihydropteroate synthase-like"/>
    <property type="match status" value="1"/>
</dbReference>
<dbReference type="Gene3D" id="3.30.413.10">
    <property type="entry name" value="Sulfite Reductase Hemoprotein, domain 1"/>
    <property type="match status" value="1"/>
</dbReference>
<dbReference type="HAMAP" id="MF_00159">
    <property type="entry name" value="IspG"/>
    <property type="match status" value="1"/>
</dbReference>
<dbReference type="InterPro" id="IPR011005">
    <property type="entry name" value="Dihydropteroate_synth-like_sf"/>
</dbReference>
<dbReference type="InterPro" id="IPR016425">
    <property type="entry name" value="IspG_bac"/>
</dbReference>
<dbReference type="InterPro" id="IPR004588">
    <property type="entry name" value="IspG_bac-typ"/>
</dbReference>
<dbReference type="InterPro" id="IPR045854">
    <property type="entry name" value="NO2/SO3_Rdtase_4Fe4S_sf"/>
</dbReference>
<dbReference type="NCBIfam" id="TIGR00612">
    <property type="entry name" value="ispG_gcpE"/>
    <property type="match status" value="1"/>
</dbReference>
<dbReference type="NCBIfam" id="NF001540">
    <property type="entry name" value="PRK00366.1"/>
    <property type="match status" value="1"/>
</dbReference>
<dbReference type="PANTHER" id="PTHR30454">
    <property type="entry name" value="4-HYDROXY-3-METHYLBUT-2-EN-1-YL DIPHOSPHATE SYNTHASE"/>
    <property type="match status" value="1"/>
</dbReference>
<dbReference type="PANTHER" id="PTHR30454:SF0">
    <property type="entry name" value="4-HYDROXY-3-METHYLBUT-2-EN-1-YL DIPHOSPHATE SYNTHASE (FERREDOXIN), CHLOROPLASTIC"/>
    <property type="match status" value="1"/>
</dbReference>
<dbReference type="Pfam" id="PF04551">
    <property type="entry name" value="GcpE"/>
    <property type="match status" value="1"/>
</dbReference>
<dbReference type="PIRSF" id="PIRSF004640">
    <property type="entry name" value="IspG"/>
    <property type="match status" value="1"/>
</dbReference>
<proteinExistence type="inferred from homology"/>
<evidence type="ECO:0000255" key="1">
    <source>
        <dbReference type="HAMAP-Rule" id="MF_00159"/>
    </source>
</evidence>
<evidence type="ECO:0000256" key="2">
    <source>
        <dbReference type="SAM" id="MobiDB-lite"/>
    </source>
</evidence>
<reference key="1">
    <citation type="submission" date="2008-04" db="EMBL/GenBank/DDBJ databases">
        <title>Complete sequence of chromosome 1 of Burkholderia ambifaria MC40-6.</title>
        <authorList>
            <person name="Copeland A."/>
            <person name="Lucas S."/>
            <person name="Lapidus A."/>
            <person name="Glavina del Rio T."/>
            <person name="Dalin E."/>
            <person name="Tice H."/>
            <person name="Pitluck S."/>
            <person name="Chain P."/>
            <person name="Malfatti S."/>
            <person name="Shin M."/>
            <person name="Vergez L."/>
            <person name="Lang D."/>
            <person name="Schmutz J."/>
            <person name="Larimer F."/>
            <person name="Land M."/>
            <person name="Hauser L."/>
            <person name="Kyrpides N."/>
            <person name="Lykidis A."/>
            <person name="Ramette A."/>
            <person name="Konstantinidis K."/>
            <person name="Tiedje J."/>
            <person name="Richardson P."/>
        </authorList>
    </citation>
    <scope>NUCLEOTIDE SEQUENCE [LARGE SCALE GENOMIC DNA]</scope>
    <source>
        <strain>MC40-6</strain>
    </source>
</reference>
<keyword id="KW-0004">4Fe-4S</keyword>
<keyword id="KW-0408">Iron</keyword>
<keyword id="KW-0411">Iron-sulfur</keyword>
<keyword id="KW-0414">Isoprene biosynthesis</keyword>
<keyword id="KW-0479">Metal-binding</keyword>
<keyword id="KW-0560">Oxidoreductase</keyword>
<name>ISPG_BURA4</name>